<feature type="chain" id="PRO_0000320494" description="Histone chaperone RTT106">
    <location>
        <begin position="1"/>
        <end position="492"/>
    </location>
</feature>
<feature type="region of interest" description="Disordered" evidence="2">
    <location>
        <begin position="392"/>
        <end position="492"/>
    </location>
</feature>
<feature type="compositionally biased region" description="Polar residues" evidence="2">
    <location>
        <begin position="396"/>
        <end position="408"/>
    </location>
</feature>
<feature type="compositionally biased region" description="Acidic residues" evidence="2">
    <location>
        <begin position="412"/>
        <end position="471"/>
    </location>
</feature>
<feature type="compositionally biased region" description="Basic and acidic residues" evidence="2">
    <location>
        <begin position="472"/>
        <end position="492"/>
    </location>
</feature>
<proteinExistence type="inferred from homology"/>
<evidence type="ECO:0000250" key="1"/>
<evidence type="ECO:0000256" key="2">
    <source>
        <dbReference type="SAM" id="MobiDB-lite"/>
    </source>
</evidence>
<evidence type="ECO:0000305" key="3"/>
<accession>A5E4Y7</accession>
<name>RT106_LODEL</name>
<protein>
    <recommendedName>
        <fullName>Histone chaperone RTT106</fullName>
    </recommendedName>
</protein>
<gene>
    <name type="primary">RTT106</name>
    <name type="ORF">LELG_04676</name>
</gene>
<sequence length="492" mass="55008">MTDWIGQFPKELQDRIQAVVSRDASSQQVFIDVINFIEKEESNKRRKLASGLGLAEDSNDAVGSSLDELSPSPTIHPDTIIFEIPQVSFMSPVRKRMNLTFHLIEQNGQGLPVLSIVNPANNSPDISYINLQNAVKLCLILPILGNSTNPLKKGVVTLCCWMHDLYYTDVNVSKDPLILQLNLDAIKKLMIKSEKLPADIENQFDLTNYRNSVILNPIQERIIDYFTRQFKLCGVNLVSYLPSDTIVKNSFIVNQDTAVALSTSGNDSTKPAMVMVECHKGARDGNLILLEQNEHNPAYILFAFRKPTLVYAISRVLSASYTSVTKHTFSLTIIVLNEKDEERSIEFSIIDQAYFQLIDDFIRSHGISDDSFNEDNKEKVVDSKANVVRAAVNGMLGTTTPATTNSRANGDGGDDDDDEEEDGDFEAGNDDDDSDVAEEYDSAAESVEGEGEEEEEEEEEKEEDVEEEDENNTGKERTKHRNGDVFTRSKEE</sequence>
<keyword id="KW-0143">Chaperone</keyword>
<keyword id="KW-0158">Chromosome</keyword>
<keyword id="KW-0238">DNA-binding</keyword>
<keyword id="KW-0539">Nucleus</keyword>
<keyword id="KW-1185">Reference proteome</keyword>
<keyword id="KW-0804">Transcription</keyword>
<keyword id="KW-0805">Transcription regulation</keyword>
<dbReference type="EMBL" id="CH981530">
    <property type="protein sequence ID" value="EDK46495.1"/>
    <property type="molecule type" value="Genomic_DNA"/>
</dbReference>
<dbReference type="RefSeq" id="XP_001523863.1">
    <property type="nucleotide sequence ID" value="XM_001523813.1"/>
</dbReference>
<dbReference type="SMR" id="A5E4Y7"/>
<dbReference type="FunCoup" id="A5E4Y7">
    <property type="interactions" value="129"/>
</dbReference>
<dbReference type="STRING" id="379508.A5E4Y7"/>
<dbReference type="GeneID" id="5231208"/>
<dbReference type="KEGG" id="lel:PVL30_005406"/>
<dbReference type="VEuPathDB" id="FungiDB:LELG_04676"/>
<dbReference type="eggNOG" id="ENOG502R9PE">
    <property type="taxonomic scope" value="Eukaryota"/>
</dbReference>
<dbReference type="HOGENOM" id="CLU_040939_0_0_1"/>
<dbReference type="InParanoid" id="A5E4Y7"/>
<dbReference type="OMA" id="TRLTFNV"/>
<dbReference type="OrthoDB" id="75754at2759"/>
<dbReference type="Proteomes" id="UP000001996">
    <property type="component" value="Unassembled WGS sequence"/>
</dbReference>
<dbReference type="GO" id="GO:0005694">
    <property type="term" value="C:chromosome"/>
    <property type="evidence" value="ECO:0007669"/>
    <property type="project" value="UniProtKB-SubCell"/>
</dbReference>
<dbReference type="GO" id="GO:0005634">
    <property type="term" value="C:nucleus"/>
    <property type="evidence" value="ECO:0007669"/>
    <property type="project" value="UniProtKB-SubCell"/>
</dbReference>
<dbReference type="GO" id="GO:0003677">
    <property type="term" value="F:DNA binding"/>
    <property type="evidence" value="ECO:0007669"/>
    <property type="project" value="UniProtKB-KW"/>
</dbReference>
<dbReference type="GO" id="GO:0042393">
    <property type="term" value="F:histone binding"/>
    <property type="evidence" value="ECO:0007669"/>
    <property type="project" value="TreeGrafter"/>
</dbReference>
<dbReference type="GO" id="GO:0031491">
    <property type="term" value="F:nucleosome binding"/>
    <property type="evidence" value="ECO:0007669"/>
    <property type="project" value="TreeGrafter"/>
</dbReference>
<dbReference type="Gene3D" id="2.30.29.120">
    <property type="match status" value="1"/>
</dbReference>
<dbReference type="Gene3D" id="2.30.29.30">
    <property type="entry name" value="Pleckstrin-homology domain (PH domain)/Phosphotyrosine-binding domain (PTB)"/>
    <property type="match status" value="1"/>
</dbReference>
<dbReference type="InterPro" id="IPR011993">
    <property type="entry name" value="PH-like_dom_sf"/>
</dbReference>
<dbReference type="InterPro" id="IPR013719">
    <property type="entry name" value="RTT106/SPT16-like_middle_dom"/>
</dbReference>
<dbReference type="InterPro" id="IPR050454">
    <property type="entry name" value="RTT106/SSRP1_HistChap/FACT"/>
</dbReference>
<dbReference type="InterPro" id="IPR040770">
    <property type="entry name" value="Rtt106_PH"/>
</dbReference>
<dbReference type="PANTHER" id="PTHR45849">
    <property type="entry name" value="FACT COMPLEX SUBUNIT SSRP1"/>
    <property type="match status" value="1"/>
</dbReference>
<dbReference type="PANTHER" id="PTHR45849:SF3">
    <property type="entry name" value="HISTONE CHAPERONE RTT106"/>
    <property type="match status" value="1"/>
</dbReference>
<dbReference type="Pfam" id="PF18469">
    <property type="entry name" value="PH_18"/>
    <property type="match status" value="1"/>
</dbReference>
<dbReference type="Pfam" id="PF08512">
    <property type="entry name" value="Rttp106-like_middle"/>
    <property type="match status" value="1"/>
</dbReference>
<dbReference type="SMART" id="SM01287">
    <property type="entry name" value="Rtt106"/>
    <property type="match status" value="1"/>
</dbReference>
<dbReference type="SUPFAM" id="SSF50729">
    <property type="entry name" value="PH domain-like"/>
    <property type="match status" value="1"/>
</dbReference>
<reference key="1">
    <citation type="journal article" date="2009" name="Nature">
        <title>Evolution of pathogenicity and sexual reproduction in eight Candida genomes.</title>
        <authorList>
            <person name="Butler G."/>
            <person name="Rasmussen M.D."/>
            <person name="Lin M.F."/>
            <person name="Santos M.A.S."/>
            <person name="Sakthikumar S."/>
            <person name="Munro C.A."/>
            <person name="Rheinbay E."/>
            <person name="Grabherr M."/>
            <person name="Forche A."/>
            <person name="Reedy J.L."/>
            <person name="Agrafioti I."/>
            <person name="Arnaud M.B."/>
            <person name="Bates S."/>
            <person name="Brown A.J.P."/>
            <person name="Brunke S."/>
            <person name="Costanzo M.C."/>
            <person name="Fitzpatrick D.A."/>
            <person name="de Groot P.W.J."/>
            <person name="Harris D."/>
            <person name="Hoyer L.L."/>
            <person name="Hube B."/>
            <person name="Klis F.M."/>
            <person name="Kodira C."/>
            <person name="Lennard N."/>
            <person name="Logue M.E."/>
            <person name="Martin R."/>
            <person name="Neiman A.M."/>
            <person name="Nikolaou E."/>
            <person name="Quail M.A."/>
            <person name="Quinn J."/>
            <person name="Santos M.C."/>
            <person name="Schmitzberger F.F."/>
            <person name="Sherlock G."/>
            <person name="Shah P."/>
            <person name="Silverstein K.A.T."/>
            <person name="Skrzypek M.S."/>
            <person name="Soll D."/>
            <person name="Staggs R."/>
            <person name="Stansfield I."/>
            <person name="Stumpf M.P.H."/>
            <person name="Sudbery P.E."/>
            <person name="Srikantha T."/>
            <person name="Zeng Q."/>
            <person name="Berman J."/>
            <person name="Berriman M."/>
            <person name="Heitman J."/>
            <person name="Gow N.A.R."/>
            <person name="Lorenz M.C."/>
            <person name="Birren B.W."/>
            <person name="Kellis M."/>
            <person name="Cuomo C.A."/>
        </authorList>
    </citation>
    <scope>NUCLEOTIDE SEQUENCE [LARGE SCALE GENOMIC DNA]</scope>
    <source>
        <strain>ATCC 11503 / BCRC 21390 / CBS 2605 / JCM 1781 / NBRC 1676 / NRRL YB-4239</strain>
    </source>
</reference>
<comment type="function">
    <text evidence="1">Histones H3 and H4 chaperone involved in the nucleosome formation and heterochromatin silencing. Required for the deposition of H3K56ac-carrying H3-H4 complex onto newly-replicated DNA. Plays a role in the transcriptional regulation of the cell-cycle dependent histone genes by creating a repressive structure at the core histone gene promoter (By similarity).</text>
</comment>
<comment type="subunit">
    <text evidence="1">Interacts with histones H3 and H4.</text>
</comment>
<comment type="subcellular location">
    <subcellularLocation>
        <location evidence="1">Nucleus</location>
    </subcellularLocation>
    <subcellularLocation>
        <location evidence="1">Chromosome</location>
    </subcellularLocation>
</comment>
<comment type="similarity">
    <text evidence="3">Belongs to the RTT106 family.</text>
</comment>
<organism>
    <name type="scientific">Lodderomyces elongisporus (strain ATCC 11503 / CBS 2605 / JCM 1781 / NBRC 1676 / NRRL YB-4239)</name>
    <name type="common">Yeast</name>
    <name type="synonym">Saccharomyces elongisporus</name>
    <dbReference type="NCBI Taxonomy" id="379508"/>
    <lineage>
        <taxon>Eukaryota</taxon>
        <taxon>Fungi</taxon>
        <taxon>Dikarya</taxon>
        <taxon>Ascomycota</taxon>
        <taxon>Saccharomycotina</taxon>
        <taxon>Pichiomycetes</taxon>
        <taxon>Debaryomycetaceae</taxon>
        <taxon>Candida/Lodderomyces clade</taxon>
        <taxon>Lodderomyces</taxon>
    </lineage>
</organism>